<comment type="function">
    <text evidence="1">Catalyzes the reversible isomerization-deamination of glucosamine 6-phosphate (GlcN6P) to form fructose 6-phosphate (Fru6P) and ammonium ion.</text>
</comment>
<comment type="catalytic activity">
    <reaction evidence="1">
        <text>alpha-D-glucosamine 6-phosphate + H2O = beta-D-fructose 6-phosphate + NH4(+)</text>
        <dbReference type="Rhea" id="RHEA:12172"/>
        <dbReference type="ChEBI" id="CHEBI:15377"/>
        <dbReference type="ChEBI" id="CHEBI:28938"/>
        <dbReference type="ChEBI" id="CHEBI:57634"/>
        <dbReference type="ChEBI" id="CHEBI:75989"/>
        <dbReference type="EC" id="3.5.99.6"/>
    </reaction>
</comment>
<comment type="activity regulation">
    <text evidence="1">Allosterically activated by N-acetylglucosamine 6-phosphate (GlcNAc6P).</text>
</comment>
<comment type="pathway">
    <text evidence="1">Amino-sugar metabolism; N-acetylneuraminate degradation; D-fructose 6-phosphate from N-acetylneuraminate: step 5/5.</text>
</comment>
<comment type="subunit">
    <text evidence="1">Homohexamer.</text>
</comment>
<comment type="similarity">
    <text evidence="1">Belongs to the glucosamine/galactosamine-6-phosphate isomerase family. NagB subfamily.</text>
</comment>
<keyword id="KW-0021">Allosteric enzyme</keyword>
<keyword id="KW-0119">Carbohydrate metabolism</keyword>
<keyword id="KW-0378">Hydrolase</keyword>
<gene>
    <name evidence="1" type="primary">nagB</name>
    <name type="ordered locus">NT01EI_2908</name>
</gene>
<proteinExistence type="inferred from homology"/>
<protein>
    <recommendedName>
        <fullName evidence="1">Glucosamine-6-phosphate deaminase</fullName>
        <ecNumber evidence="1">3.5.99.6</ecNumber>
    </recommendedName>
    <alternativeName>
        <fullName evidence="1">GlcN6P deaminase</fullName>
        <shortName evidence="1">GNPDA</shortName>
    </alternativeName>
    <alternativeName>
        <fullName evidence="1">Glucosamine-6-phosphate isomerase</fullName>
    </alternativeName>
</protein>
<feature type="chain" id="PRO_1000214083" description="Glucosamine-6-phosphate deaminase">
    <location>
        <begin position="1"/>
        <end position="266"/>
    </location>
</feature>
<feature type="active site" description="Proton acceptor; for enolization step" evidence="1">
    <location>
        <position position="72"/>
    </location>
</feature>
<feature type="active site" description="For ring-opening step" evidence="1">
    <location>
        <position position="141"/>
    </location>
</feature>
<feature type="active site" description="Proton acceptor; for ring-opening step" evidence="1">
    <location>
        <position position="143"/>
    </location>
</feature>
<feature type="active site" description="For ring-opening step" evidence="1">
    <location>
        <position position="148"/>
    </location>
</feature>
<feature type="site" description="Part of the allosteric site" evidence="1">
    <location>
        <position position="151"/>
    </location>
</feature>
<feature type="site" description="Part of the allosteric site" evidence="1">
    <location>
        <position position="158"/>
    </location>
</feature>
<feature type="site" description="Part of the allosteric site" evidence="1">
    <location>
        <position position="160"/>
    </location>
</feature>
<feature type="site" description="Part of the allosteric site" evidence="1">
    <location>
        <position position="161"/>
    </location>
</feature>
<feature type="site" description="Part of the allosteric site" evidence="1">
    <location>
        <position position="254"/>
    </location>
</feature>
<name>NAGB_EDWI9</name>
<sequence>MRLIPLHNATDVGLWSARHIVKRINAFKPTAERPFVLGLPTGSTPLQTYKRLIEIYQAGEVSFRHVVTFNMDEYVGLAESHPESYHSFMYNNFFNHIDIHKENINLLNGNAPDVDAECRRYEEKISSYGKINLFMGGVGNDGHIAFNEPASSLASRTRIKTLTEDTRIANSRFFNGDISLVPKYALTVGVGTLLDAEEVMILVTGHAKSLALQAAVEGSVNHMWTISALQLHPKSVVVCDQPATMELKVKTVNYFRELEAENMKDL</sequence>
<dbReference type="EC" id="3.5.99.6" evidence="1"/>
<dbReference type="EMBL" id="CP001600">
    <property type="protein sequence ID" value="ACR70069.1"/>
    <property type="molecule type" value="Genomic_DNA"/>
</dbReference>
<dbReference type="RefSeq" id="WP_015872163.1">
    <property type="nucleotide sequence ID" value="NZ_CP169062.1"/>
</dbReference>
<dbReference type="SMR" id="C5BGA6"/>
<dbReference type="STRING" id="67780.B6E78_06455"/>
<dbReference type="GeneID" id="69539793"/>
<dbReference type="KEGG" id="eic:NT01EI_2908"/>
<dbReference type="PATRIC" id="fig|634503.3.peg.2603"/>
<dbReference type="HOGENOM" id="CLU_049611_0_1_6"/>
<dbReference type="OrthoDB" id="9791139at2"/>
<dbReference type="UniPathway" id="UPA00629">
    <property type="reaction ID" value="UER00684"/>
</dbReference>
<dbReference type="Proteomes" id="UP000001485">
    <property type="component" value="Chromosome"/>
</dbReference>
<dbReference type="GO" id="GO:0005737">
    <property type="term" value="C:cytoplasm"/>
    <property type="evidence" value="ECO:0007669"/>
    <property type="project" value="TreeGrafter"/>
</dbReference>
<dbReference type="GO" id="GO:0004342">
    <property type="term" value="F:glucosamine-6-phosphate deaminase activity"/>
    <property type="evidence" value="ECO:0007669"/>
    <property type="project" value="UniProtKB-UniRule"/>
</dbReference>
<dbReference type="GO" id="GO:0042802">
    <property type="term" value="F:identical protein binding"/>
    <property type="evidence" value="ECO:0007669"/>
    <property type="project" value="TreeGrafter"/>
</dbReference>
<dbReference type="GO" id="GO:0005975">
    <property type="term" value="P:carbohydrate metabolic process"/>
    <property type="evidence" value="ECO:0007669"/>
    <property type="project" value="InterPro"/>
</dbReference>
<dbReference type="GO" id="GO:0006043">
    <property type="term" value="P:glucosamine catabolic process"/>
    <property type="evidence" value="ECO:0007669"/>
    <property type="project" value="TreeGrafter"/>
</dbReference>
<dbReference type="GO" id="GO:0006046">
    <property type="term" value="P:N-acetylglucosamine catabolic process"/>
    <property type="evidence" value="ECO:0007669"/>
    <property type="project" value="TreeGrafter"/>
</dbReference>
<dbReference type="GO" id="GO:0019262">
    <property type="term" value="P:N-acetylneuraminate catabolic process"/>
    <property type="evidence" value="ECO:0007669"/>
    <property type="project" value="UniProtKB-UniRule"/>
</dbReference>
<dbReference type="CDD" id="cd01399">
    <property type="entry name" value="GlcN6P_deaminase"/>
    <property type="match status" value="1"/>
</dbReference>
<dbReference type="FunFam" id="3.40.50.1360:FF:000002">
    <property type="entry name" value="Glucosamine-6-phosphate deaminase"/>
    <property type="match status" value="1"/>
</dbReference>
<dbReference type="Gene3D" id="3.40.50.1360">
    <property type="match status" value="1"/>
</dbReference>
<dbReference type="HAMAP" id="MF_01241">
    <property type="entry name" value="GlcN6P_deamin"/>
    <property type="match status" value="1"/>
</dbReference>
<dbReference type="InterPro" id="IPR006148">
    <property type="entry name" value="Glc/Gal-6P_isomerase"/>
</dbReference>
<dbReference type="InterPro" id="IPR004547">
    <property type="entry name" value="Glucosamine6P_isomerase"/>
</dbReference>
<dbReference type="InterPro" id="IPR018321">
    <property type="entry name" value="Glucosamine6P_isomerase_CS"/>
</dbReference>
<dbReference type="InterPro" id="IPR037171">
    <property type="entry name" value="NagB/RpiA_transferase-like"/>
</dbReference>
<dbReference type="NCBIfam" id="TIGR00502">
    <property type="entry name" value="nagB"/>
    <property type="match status" value="1"/>
</dbReference>
<dbReference type="NCBIfam" id="NF001685">
    <property type="entry name" value="PRK00443.1-5"/>
    <property type="match status" value="1"/>
</dbReference>
<dbReference type="PANTHER" id="PTHR11280">
    <property type="entry name" value="GLUCOSAMINE-6-PHOSPHATE ISOMERASE"/>
    <property type="match status" value="1"/>
</dbReference>
<dbReference type="PANTHER" id="PTHR11280:SF5">
    <property type="entry name" value="GLUCOSAMINE-6-PHOSPHATE ISOMERASE"/>
    <property type="match status" value="1"/>
</dbReference>
<dbReference type="Pfam" id="PF01182">
    <property type="entry name" value="Glucosamine_iso"/>
    <property type="match status" value="1"/>
</dbReference>
<dbReference type="SUPFAM" id="SSF100950">
    <property type="entry name" value="NagB/RpiA/CoA transferase-like"/>
    <property type="match status" value="1"/>
</dbReference>
<dbReference type="PROSITE" id="PS01161">
    <property type="entry name" value="GLC_GALNAC_ISOMERASE"/>
    <property type="match status" value="1"/>
</dbReference>
<evidence type="ECO:0000255" key="1">
    <source>
        <dbReference type="HAMAP-Rule" id="MF_01241"/>
    </source>
</evidence>
<organism>
    <name type="scientific">Edwardsiella ictaluri (strain 93-146)</name>
    <dbReference type="NCBI Taxonomy" id="634503"/>
    <lineage>
        <taxon>Bacteria</taxon>
        <taxon>Pseudomonadati</taxon>
        <taxon>Pseudomonadota</taxon>
        <taxon>Gammaproteobacteria</taxon>
        <taxon>Enterobacterales</taxon>
        <taxon>Hafniaceae</taxon>
        <taxon>Edwardsiella</taxon>
    </lineage>
</organism>
<accession>C5BGA6</accession>
<reference key="1">
    <citation type="submission" date="2009-03" db="EMBL/GenBank/DDBJ databases">
        <title>Complete genome sequence of Edwardsiella ictaluri 93-146.</title>
        <authorList>
            <person name="Williams M.L."/>
            <person name="Gillaspy A.F."/>
            <person name="Dyer D.W."/>
            <person name="Thune R.L."/>
            <person name="Waldbieser G.C."/>
            <person name="Schuster S.C."/>
            <person name="Gipson J."/>
            <person name="Zaitshik J."/>
            <person name="Landry C."/>
            <person name="Lawrence M.L."/>
        </authorList>
    </citation>
    <scope>NUCLEOTIDE SEQUENCE [LARGE SCALE GENOMIC DNA]</scope>
    <source>
        <strain>93-146</strain>
    </source>
</reference>